<accession>O75691</accession>
<accession>Q9H3H4</accession>
<evidence type="ECO:0000255" key="1"/>
<evidence type="ECO:0000256" key="2">
    <source>
        <dbReference type="SAM" id="MobiDB-lite"/>
    </source>
</evidence>
<evidence type="ECO:0000269" key="3">
    <source>
    </source>
</evidence>
<evidence type="ECO:0000269" key="4">
    <source>
    </source>
</evidence>
<evidence type="ECO:0000269" key="5">
    <source>
    </source>
</evidence>
<evidence type="ECO:0000269" key="6">
    <source>
    </source>
</evidence>
<evidence type="ECO:0000269" key="7">
    <source>
    </source>
</evidence>
<evidence type="ECO:0000269" key="8">
    <source>
    </source>
</evidence>
<evidence type="ECO:0000269" key="9">
    <source>
    </source>
</evidence>
<evidence type="ECO:0000269" key="10">
    <source>
    </source>
</evidence>
<evidence type="ECO:0000305" key="11"/>
<evidence type="ECO:0000312" key="12">
    <source>
        <dbReference type="HGNC" id="HGNC:17897"/>
    </source>
</evidence>
<evidence type="ECO:0007744" key="13">
    <source>
        <dbReference type="PDB" id="7MQ8"/>
    </source>
</evidence>
<evidence type="ECO:0007744" key="14">
    <source>
        <dbReference type="PDB" id="7MQ9"/>
    </source>
</evidence>
<evidence type="ECO:0007744" key="15">
    <source>
        <dbReference type="PDB" id="7MQA"/>
    </source>
</evidence>
<evidence type="ECO:0007744" key="16">
    <source>
    </source>
</evidence>
<evidence type="ECO:0007744" key="17">
    <source>
    </source>
</evidence>
<evidence type="ECO:0007744" key="18">
    <source>
    </source>
</evidence>
<evidence type="ECO:0007744" key="19">
    <source>
    </source>
</evidence>
<evidence type="ECO:0007744" key="20">
    <source>
    </source>
</evidence>
<evidence type="ECO:0007744" key="21">
    <source>
    </source>
</evidence>
<feature type="chain" id="PRO_0000080011" description="Small subunit processome component 20 homolog">
    <location>
        <begin position="1"/>
        <end position="2785"/>
    </location>
</feature>
<feature type="repeat" description="HEAT 1">
    <location>
        <begin position="165"/>
        <end position="202"/>
    </location>
</feature>
<feature type="repeat" description="HEAT 2">
    <location>
        <begin position="1841"/>
        <end position="1878"/>
    </location>
</feature>
<feature type="region of interest" description="Disordered" evidence="2">
    <location>
        <begin position="880"/>
        <end position="907"/>
    </location>
</feature>
<feature type="region of interest" description="Disordered" evidence="2">
    <location>
        <begin position="1720"/>
        <end position="1760"/>
    </location>
</feature>
<feature type="coiled-coil region" evidence="1">
    <location>
        <begin position="2688"/>
        <end position="2765"/>
    </location>
</feature>
<feature type="short sequence motif" description="Nuclear localization signal">
    <location>
        <begin position="2744"/>
        <end position="2775"/>
    </location>
</feature>
<feature type="short sequence motif" description="Nucleolar localization signal">
    <location>
        <begin position="2744"/>
        <end position="2761"/>
    </location>
</feature>
<feature type="compositionally biased region" description="Acidic residues" evidence="2">
    <location>
        <begin position="880"/>
        <end position="897"/>
    </location>
</feature>
<feature type="modified residue" description="Phosphoserine" evidence="17">
    <location>
        <position position="788"/>
    </location>
</feature>
<feature type="modified residue" description="Phosphothreonine" evidence="16 17 18 20 21">
    <location>
        <position position="1741"/>
    </location>
</feature>
<feature type="modified residue" description="Phosphoserine" evidence="19 20">
    <location>
        <position position="2601"/>
    </location>
</feature>
<feature type="modified residue" description="Phosphoserine" evidence="21">
    <location>
        <position position="2637"/>
    </location>
</feature>
<feature type="sequence variant" id="VAR_055135" description="In dbSNP:rs2290723.">
    <original>M</original>
    <variation>T</variation>
    <location>
        <position position="120"/>
    </location>
</feature>
<feature type="sequence variant" id="VAR_022162" description="In dbSNP:rs4764643.">
    <original>S</original>
    <variation>C</variation>
    <location>
        <position position="502"/>
    </location>
</feature>
<feature type="sequence variant" id="VAR_036274" description="In a breast cancer sample; somatic mutation; dbSNP:rs140657361." evidence="7">
    <original>K</original>
    <variation>I</variation>
    <location>
        <position position="1645"/>
    </location>
</feature>
<feature type="sequence variant" id="VAR_055136" description="In dbSNP:rs10082778." evidence="10">
    <original>L</original>
    <variation>Q</variation>
    <location>
        <position position="1882"/>
    </location>
</feature>
<feature type="sequence variant" id="VAR_036275" description="In a breast cancer sample; somatic mutation." evidence="7">
    <original>I</original>
    <variation>F</variation>
    <location>
        <position position="2452"/>
    </location>
</feature>
<feature type="sequence variant" id="VAR_022163" description="In dbSNP:rs1061436.">
    <original>E</original>
    <variation>Q</variation>
    <location>
        <position position="2612"/>
    </location>
</feature>
<feature type="mutagenesis site" description="Inhibits nucleolar but not nuclear localization." evidence="6">
    <original>KKK</original>
    <variation>AAA</variation>
    <location>
        <begin position="2744"/>
        <end position="2746"/>
    </location>
</feature>
<feature type="mutagenesis site" description="Does not decrease nucleolar localization." evidence="6">
    <original>K</original>
    <variation>A</variation>
    <location>
        <position position="2744"/>
    </location>
</feature>
<feature type="mutagenesis site" description="Does not decrease nucleolar localization." evidence="6">
    <original>K</original>
    <variation>A</variation>
    <location>
        <position position="2745"/>
    </location>
</feature>
<feature type="mutagenesis site" description="Decreases nucleolar localization." evidence="6">
    <original>K</original>
    <variation>A</variation>
    <location>
        <position position="2746"/>
    </location>
</feature>
<feature type="mutagenesis site" description="Inhibits nucleolar but not nuclear localization." evidence="6">
    <original>KK</original>
    <variation>AA</variation>
    <location>
        <begin position="2748"/>
        <end position="2749"/>
    </location>
</feature>
<feature type="mutagenesis site" description="Does not decrease nucleolar localization." evidence="6">
    <original>K</original>
    <variation>A</variation>
    <location>
        <position position="2748"/>
    </location>
</feature>
<feature type="mutagenesis site" description="Decreases nucleolar localization." evidence="6">
    <original>K</original>
    <variation>A</variation>
    <location>
        <position position="2749"/>
    </location>
</feature>
<feature type="mutagenesis site" description="Does not decrease nucleolar localization." evidence="6">
    <original>K</original>
    <variation>A</variation>
    <location>
        <position position="2751"/>
    </location>
</feature>
<feature type="mutagenesis site" description="Does not decrease nucleolar localization." evidence="6">
    <original>K</original>
    <variation>A</variation>
    <location>
        <position position="2753"/>
    </location>
</feature>
<feature type="mutagenesis site" description="Inhibits nucleolar localization and decreases nuclear localization." evidence="6">
    <original>KKRK</original>
    <variation>AAAA</variation>
    <location>
        <begin position="2757"/>
        <end position="2760"/>
    </location>
</feature>
<feature type="mutagenesis site" description="Does not decrease nucleolar localization." evidence="6">
    <original>K</original>
    <variation>A</variation>
    <location>
        <position position="2757"/>
    </location>
</feature>
<feature type="mutagenesis site" description="Does not decrease nucleolar localization." evidence="6">
    <original>K</original>
    <variation>A</variation>
    <location>
        <position position="2758"/>
    </location>
</feature>
<feature type="mutagenesis site" description="Does not decrease nucleolar localization." evidence="6">
    <original>K</original>
    <variation>A</variation>
    <location>
        <position position="2760"/>
    </location>
</feature>
<feature type="sequence conflict" description="In Ref. 1; CAA07243." evidence="11" ref="1">
    <original>A</original>
    <variation>P</variation>
    <location>
        <position position="1505"/>
    </location>
</feature>
<proteinExistence type="evidence at protein level"/>
<gene>
    <name evidence="12" type="primary">UTP20</name>
    <name type="synonym">DRIM</name>
</gene>
<organism>
    <name type="scientific">Homo sapiens</name>
    <name type="common">Human</name>
    <dbReference type="NCBI Taxonomy" id="9606"/>
    <lineage>
        <taxon>Eukaryota</taxon>
        <taxon>Metazoa</taxon>
        <taxon>Chordata</taxon>
        <taxon>Craniata</taxon>
        <taxon>Vertebrata</taxon>
        <taxon>Euteleostomi</taxon>
        <taxon>Mammalia</taxon>
        <taxon>Eutheria</taxon>
        <taxon>Euarchontoglires</taxon>
        <taxon>Primates</taxon>
        <taxon>Haplorrhini</taxon>
        <taxon>Catarrhini</taxon>
        <taxon>Hominidae</taxon>
        <taxon>Homo</taxon>
    </lineage>
</organism>
<sequence length="2785" mass="318385">MKTKPVSHKTENTYRFLTFAERLGNVNIDIIHRIDRTASYEEEVETYFFEGLLKWRELNLTEHFGKFYKEVIDKCQSFNQLVYHQNEIVQSLKTHLQVKNSFAYQPLLDLVVQLARDLQMDFYPHFPEFFLTITSILETQDTELLEWAFTSLSYLYKYLWRLMVKDMSSIYSMYSTLLAHKKLHIRNFAAESFTFLMRKVSDKNALFNLMFLDLDKHPEKVEGVGQLLFEMCKGVRNMFHSCTGQAVKLILRKLGPVTETETQLPWMLIGETLKNMVKSTVSYISKEHFGTFFECLQESLLDLHTKVTKTNCCESSEQIKRLLETYLILVKHGSGTKIPTPADVCKVLSQTLQVASLSTSCWETLLDVISALILGENVSLPETLIKETIEKIFESRFEKRLIFSFSEVMFAMKQFEQLFLPSFLSYIVNCFLIDDAVVKDEALAILAKLILNKAAPPTAGSMAIEKYPLVFSPQMVGFYIKQKKTRSKGRNEQFPVLDHLLSIIKLPPNKDTTYLSQSWAALVVLPHIRPLEKEKVIPLVTGFIEALFMTVDKGSFGKGNLFVLCQAVNTLLSLEESSELLHLVPVERVKNLVLTFPLEPSVLLLTDLYYQRLALCGCKGPLSQEALMELFPKLQANISTGVSKIRLLTIRILNHFDVQLPESMEDDGLSERQSVFAILRQAELVPATVNDYREKLLHLRKLRHDVVQTAVPDGPLQEVPLRYLLGMLYINFSALWDPVIELISSHAHEMENKQFWKVYYEHLEKAATHAEKELQNDMTDEKSVGDESWEQTQEGDVGALYHEQLALKTDCQERLDHTNFRFLLWRALTKFPERVEPRSRELSPLFLRFINNEYYPADLQVAPTQDLRRKGKGMVAEEIEEEPAAGDDEELEEEAVPQDESSQKKKTRRAAAKQLIAHLQVFSKFSNPRALYLESKLYELYLQLLLHQDQMVQKITLDCIMTYKHPHVLPYRENLQRLLEDRSFKEEIVHFSISEDNAVVKTAHRADLFPILMRILYGRMKNKTGSKTQGKSASGTRMAIVLRFLAGTQPEEIQIFLDLLFEPVRHFKNGECHSAVIQAVEDLDLSKVLPLGRQHGILNSLEIVLKNISHLISAYLPKILQILLCMTATVSHILDQREKIQLRFINPLKNLRRLGIKMVTDIFLDWESYQFRTEEIDAVFHGAVWPQISRLGSESQYSPTPLLKLISIWSRNARYFPLLAKQKPGHPECDILTNVFAILSAKNLSDATASIVMDIVDDLLNLPDFEPTETVLNLLVTGCVYPGIAENIGESITIGGRLILPHVPAILQYLSKTTISAEKVKKKKNRAQVSKELGILSKISKFMKDKEQSSVLITLLLPFLHRGNIAEDTEVDILVTVQNLLKHCVDPTSFLKPIAKLFSVIKNKLSRKLLCTVFETLSDFESGLKYITDVVKLNAFDQRHLDDINFDVRFETFQTITSYIKEMQIVDVNYLIPVMHNCFYNLELGDMSLSDNASMCLMSIIKKLAALNVTEKDYREIIHRSLLEKLRKGLKSQTESIQQDYTTILSCLIQTFPNQLEFKDLVQLTHYHDPEMDFFENMKHIQIHRRARALKKLAKQLMEGKVVLSSKSLQNYIMPYAMTPIFDEKMLKHENITTAATEIIGAICKHLSWSAYMYYLKHFIHVLQTGQINQKLGVSLLVIVLEAFHFDHKTLEEQMGKIENEENAIEAIELPEPEAMELERVDEEEKEYTCKSLSDNGQPGTPDPADSGGTSAKESECITKPVSFLPQNKEEIERTIKNIQGTITGDILPRLHKCLASTTKREEEHKLVKSKVVNDEEVVRVPLAFAMVKLMQSLPQEVMEANLPSILLKVCALLKNRAQEIRDIARSTLAKIIEDLGVHFLLYVLKELQTTLVRGYQVHVLTFTVHMLLQGLTNKLQVGDLDSCLDIMIEIFNHELFGAVAEEKEVKQILSKVMEARRSKSYDSYEILGKFVGKDQVTKLILPLKEILQNTTSLKLARKVHETLRRITVGLIVNQEMTAESILLLSYGLISENLPLLTEKEKNPVAPAPDPRLPPQSCLLLPPTPVRGGQKAVVSRKTNMHIFIESGLRLLHLSLKTSKIKSSGECVLEMLDPFVSLLIDCLGSMDVKVITGALQCLIWVLRFPLPSIETKAEQLTKHLFLLLKDYAKLGAARGQNFHLVVNCFKCVTILVKKVKSYQITEKQLQVLLAYAEEDIYDTSRQATAFGLLKAILSRKLLVPEIDEVMRKVSKLAVSAQSEPARVQCRQVFLKYILDYPLGDKLRPNLEFMLAQLNYEHETGRESTLEMIAYLFDTFPQGLLHENCGMFFIPLCLMTINDDSATCKKMASMTIKSLLGKISLEKKDWLFDMVTTWFGAKKRLNRQLAALICGLFVESEGVDFEKRLGTVLPVIEKEIDPENFKDIMEETEEKAADRLLFSFLTLITKLIKECNIIQFTKPAETLSKIWSHVHSHLRHPHNWVWLTAAQIFGLLFASCQPEELIQKWNTKKTKKHLPEPVAIKFLASDLDQKMKSISLASCHQLHSKFLDQSLGEQVVKNLLFAAKVLYLLELYCEDKQSKIKEDLEEQEALEDGVACADEKAESDGEEKEEVKEELGRPATLLWLIQKLSRIAKLEAAYSPRNPLKRTCIFKFLGAVAMDLGIDKVKPYLPMIIAPLFRELNSTYSEQDPLLKNLSQEIIELLKKLVGLESFSLAFASVQKQANEKRALRKKRKALEFVTNPDIAAKKKMKKHKNKSEAKKRKIEFLRPGYKAKRQKSHSLKDLAMVE</sequence>
<keyword id="KW-0002">3D-structure</keyword>
<keyword id="KW-0175">Coiled coil</keyword>
<keyword id="KW-0539">Nucleus</keyword>
<keyword id="KW-0597">Phosphoprotein</keyword>
<keyword id="KW-1267">Proteomics identification</keyword>
<keyword id="KW-1185">Reference proteome</keyword>
<keyword id="KW-0677">Repeat</keyword>
<keyword id="KW-0698">rRNA processing</keyword>
<dbReference type="EMBL" id="AJ006778">
    <property type="protein sequence ID" value="CAA07243.1"/>
    <property type="molecule type" value="mRNA"/>
</dbReference>
<dbReference type="EMBL" id="AC063948">
    <property type="status" value="NOT_ANNOTATED_CDS"/>
    <property type="molecule type" value="Genomic_DNA"/>
</dbReference>
<dbReference type="EMBL" id="AC063951">
    <property type="status" value="NOT_ANNOTATED_CDS"/>
    <property type="molecule type" value="Genomic_DNA"/>
</dbReference>
<dbReference type="EMBL" id="AF072718">
    <property type="protein sequence ID" value="AAG35208.1"/>
    <property type="status" value="ALT_INIT"/>
    <property type="molecule type" value="mRNA"/>
</dbReference>
<dbReference type="CCDS" id="CCDS9081.1"/>
<dbReference type="RefSeq" id="NP_055318.2">
    <property type="nucleotide sequence ID" value="NM_014503.3"/>
</dbReference>
<dbReference type="PDB" id="7MQ8">
    <property type="method" value="EM"/>
    <property type="resolution" value="3.60 A"/>
    <property type="chains" value="SP=1-2785"/>
</dbReference>
<dbReference type="PDB" id="7MQ9">
    <property type="method" value="EM"/>
    <property type="resolution" value="3.87 A"/>
    <property type="chains" value="SP=1-2785"/>
</dbReference>
<dbReference type="PDB" id="7MQA">
    <property type="method" value="EM"/>
    <property type="resolution" value="2.70 A"/>
    <property type="chains" value="SP=1-2785"/>
</dbReference>
<dbReference type="PDBsum" id="7MQ8"/>
<dbReference type="PDBsum" id="7MQ9"/>
<dbReference type="PDBsum" id="7MQA"/>
<dbReference type="EMDB" id="EMD-23936"/>
<dbReference type="EMDB" id="EMD-23937"/>
<dbReference type="EMDB" id="EMD-23938"/>
<dbReference type="SMR" id="O75691"/>
<dbReference type="BioGRID" id="118152">
    <property type="interactions" value="214"/>
</dbReference>
<dbReference type="ComplexPortal" id="CPX-2511">
    <property type="entry name" value="Small ribosomal subunit processome"/>
</dbReference>
<dbReference type="FunCoup" id="O75691">
    <property type="interactions" value="2368"/>
</dbReference>
<dbReference type="IntAct" id="O75691">
    <property type="interactions" value="56"/>
</dbReference>
<dbReference type="MINT" id="O75691"/>
<dbReference type="STRING" id="9606.ENSP00000261637"/>
<dbReference type="CarbonylDB" id="O75691"/>
<dbReference type="GlyGen" id="O75691">
    <property type="glycosylation" value="2 sites, 1 O-linked glycan (1 site)"/>
</dbReference>
<dbReference type="iPTMnet" id="O75691"/>
<dbReference type="MetOSite" id="O75691"/>
<dbReference type="PhosphoSitePlus" id="O75691"/>
<dbReference type="SwissPalm" id="O75691"/>
<dbReference type="BioMuta" id="UTP20"/>
<dbReference type="jPOST" id="O75691"/>
<dbReference type="MassIVE" id="O75691"/>
<dbReference type="PaxDb" id="9606-ENSP00000261637"/>
<dbReference type="PeptideAtlas" id="O75691"/>
<dbReference type="ProteomicsDB" id="50164"/>
<dbReference type="Pumba" id="O75691"/>
<dbReference type="Antibodypedia" id="30370">
    <property type="antibodies" value="44 antibodies from 15 providers"/>
</dbReference>
<dbReference type="DNASU" id="27340"/>
<dbReference type="Ensembl" id="ENST00000261637.5">
    <property type="protein sequence ID" value="ENSP00000261637.4"/>
    <property type="gene ID" value="ENSG00000120800.5"/>
</dbReference>
<dbReference type="GeneID" id="27340"/>
<dbReference type="KEGG" id="hsa:27340"/>
<dbReference type="MANE-Select" id="ENST00000261637.5">
    <property type="protein sequence ID" value="ENSP00000261637.4"/>
    <property type="RefSeq nucleotide sequence ID" value="NM_014503.3"/>
    <property type="RefSeq protein sequence ID" value="NP_055318.2"/>
</dbReference>
<dbReference type="UCSC" id="uc001tia.2">
    <property type="organism name" value="human"/>
</dbReference>
<dbReference type="AGR" id="HGNC:17897"/>
<dbReference type="CTD" id="27340"/>
<dbReference type="DisGeNET" id="27340"/>
<dbReference type="GeneCards" id="UTP20"/>
<dbReference type="HGNC" id="HGNC:17897">
    <property type="gene designation" value="UTP20"/>
</dbReference>
<dbReference type="HPA" id="ENSG00000120800">
    <property type="expression patterns" value="Low tissue specificity"/>
</dbReference>
<dbReference type="MIM" id="612822">
    <property type="type" value="gene"/>
</dbReference>
<dbReference type="neXtProt" id="NX_O75691"/>
<dbReference type="OpenTargets" id="ENSG00000120800"/>
<dbReference type="PharmGKB" id="PA143485666"/>
<dbReference type="VEuPathDB" id="HostDB:ENSG00000120800"/>
<dbReference type="eggNOG" id="KOG1823">
    <property type="taxonomic scope" value="Eukaryota"/>
</dbReference>
<dbReference type="GeneTree" id="ENSGT00390000016813"/>
<dbReference type="HOGENOM" id="CLU_000327_0_1_1"/>
<dbReference type="InParanoid" id="O75691"/>
<dbReference type="OMA" id="EGLMAMF"/>
<dbReference type="OrthoDB" id="360653at2759"/>
<dbReference type="PAN-GO" id="O75691">
    <property type="GO annotations" value="3 GO annotations based on evolutionary models"/>
</dbReference>
<dbReference type="PhylomeDB" id="O75691"/>
<dbReference type="TreeFam" id="TF105652"/>
<dbReference type="PathwayCommons" id="O75691"/>
<dbReference type="Reactome" id="R-HSA-6790901">
    <property type="pathway name" value="rRNA modification in the nucleus and cytosol"/>
</dbReference>
<dbReference type="Reactome" id="R-HSA-6791226">
    <property type="pathway name" value="Major pathway of rRNA processing in the nucleolus and cytosol"/>
</dbReference>
<dbReference type="SignaLink" id="O75691"/>
<dbReference type="BioGRID-ORCS" id="27340">
    <property type="hits" value="800 hits in 1162 CRISPR screens"/>
</dbReference>
<dbReference type="CD-CODE" id="91857CE7">
    <property type="entry name" value="Nucleolus"/>
</dbReference>
<dbReference type="ChiTaRS" id="UTP20">
    <property type="organism name" value="human"/>
</dbReference>
<dbReference type="GeneWiki" id="UTP20"/>
<dbReference type="GenomeRNAi" id="27340"/>
<dbReference type="Pharos" id="O75691">
    <property type="development level" value="Tbio"/>
</dbReference>
<dbReference type="PRO" id="PR:O75691"/>
<dbReference type="Proteomes" id="UP000005640">
    <property type="component" value="Chromosome 12"/>
</dbReference>
<dbReference type="RNAct" id="O75691">
    <property type="molecule type" value="protein"/>
</dbReference>
<dbReference type="Bgee" id="ENSG00000120800">
    <property type="expression patterns" value="Expressed in male germ line stem cell (sensu Vertebrata) in testis and 139 other cell types or tissues"/>
</dbReference>
<dbReference type="GO" id="GO:0030686">
    <property type="term" value="C:90S preribosome"/>
    <property type="evidence" value="ECO:0000250"/>
    <property type="project" value="UniProtKB"/>
</dbReference>
<dbReference type="GO" id="GO:0005737">
    <property type="term" value="C:cytoplasm"/>
    <property type="evidence" value="ECO:0000250"/>
    <property type="project" value="UniProtKB"/>
</dbReference>
<dbReference type="GO" id="GO:0005730">
    <property type="term" value="C:nucleolus"/>
    <property type="evidence" value="ECO:0000314"/>
    <property type="project" value="UniProtKB"/>
</dbReference>
<dbReference type="GO" id="GO:0005654">
    <property type="term" value="C:nucleoplasm"/>
    <property type="evidence" value="ECO:0000250"/>
    <property type="project" value="UniProtKB"/>
</dbReference>
<dbReference type="GO" id="GO:0005886">
    <property type="term" value="C:plasma membrane"/>
    <property type="evidence" value="ECO:0000314"/>
    <property type="project" value="HPA"/>
</dbReference>
<dbReference type="GO" id="GO:0030688">
    <property type="term" value="C:preribosome, small subunit precursor"/>
    <property type="evidence" value="ECO:0000250"/>
    <property type="project" value="UniProtKB"/>
</dbReference>
<dbReference type="GO" id="GO:0032040">
    <property type="term" value="C:small-subunit processome"/>
    <property type="evidence" value="ECO:0000314"/>
    <property type="project" value="UniProtKB"/>
</dbReference>
<dbReference type="GO" id="GO:0003723">
    <property type="term" value="F:RNA binding"/>
    <property type="evidence" value="ECO:0007005"/>
    <property type="project" value="UniProtKB"/>
</dbReference>
<dbReference type="GO" id="GO:0000480">
    <property type="term" value="P:endonucleolytic cleavage in 5'-ETS of tricistronic rRNA transcript (SSU-rRNA, 5.8S rRNA, LSU-rRNA)"/>
    <property type="evidence" value="ECO:0000250"/>
    <property type="project" value="UniProtKB"/>
</dbReference>
<dbReference type="GO" id="GO:0000447">
    <property type="term" value="P:endonucleolytic cleavage in ITS1 to separate SSU-rRNA from 5.8S rRNA and LSU-rRNA from tricistronic rRNA transcript (SSU-rRNA, 5.8S rRNA, LSU-rRNA)"/>
    <property type="evidence" value="ECO:0000250"/>
    <property type="project" value="UniProtKB"/>
</dbReference>
<dbReference type="GO" id="GO:0000472">
    <property type="term" value="P:endonucleolytic cleavage to generate mature 5'-end of SSU-rRNA from (SSU-rRNA, 5.8S rRNA, LSU-rRNA)"/>
    <property type="evidence" value="ECO:0000250"/>
    <property type="project" value="UniProtKB"/>
</dbReference>
<dbReference type="GO" id="GO:0008285">
    <property type="term" value="P:negative regulation of cell population proliferation"/>
    <property type="evidence" value="ECO:0000304"/>
    <property type="project" value="ProtInc"/>
</dbReference>
<dbReference type="GO" id="GO:0042274">
    <property type="term" value="P:ribosomal small subunit biogenesis"/>
    <property type="evidence" value="ECO:0000314"/>
    <property type="project" value="UniProtKB"/>
</dbReference>
<dbReference type="GO" id="GO:0006364">
    <property type="term" value="P:rRNA processing"/>
    <property type="evidence" value="ECO:0000315"/>
    <property type="project" value="UniProtKB"/>
</dbReference>
<dbReference type="InterPro" id="IPR016024">
    <property type="entry name" value="ARM-type_fold"/>
</dbReference>
<dbReference type="InterPro" id="IPR052575">
    <property type="entry name" value="SSU_processome_comp_20"/>
</dbReference>
<dbReference type="InterPro" id="IPR046523">
    <property type="entry name" value="UTP20_C"/>
</dbReference>
<dbReference type="InterPro" id="IPR011430">
    <property type="entry name" value="UTP20_N"/>
</dbReference>
<dbReference type="PANTHER" id="PTHR17695">
    <property type="entry name" value="SMALL SUBUNIT PROCESSOME COMPONENT 20 HOMOLOG"/>
    <property type="match status" value="1"/>
</dbReference>
<dbReference type="PANTHER" id="PTHR17695:SF11">
    <property type="entry name" value="SMALL SUBUNIT PROCESSOME COMPONENT 20 HOMOLOG"/>
    <property type="match status" value="1"/>
</dbReference>
<dbReference type="Pfam" id="PF20416">
    <property type="entry name" value="UTP20"/>
    <property type="match status" value="1"/>
</dbReference>
<dbReference type="Pfam" id="PF23099">
    <property type="entry name" value="UTP20_C"/>
    <property type="match status" value="1"/>
</dbReference>
<dbReference type="Pfam" id="PF07539">
    <property type="entry name" value="UTP20_N"/>
    <property type="match status" value="1"/>
</dbReference>
<dbReference type="SUPFAM" id="SSF48371">
    <property type="entry name" value="ARM repeat"/>
    <property type="match status" value="3"/>
</dbReference>
<reference key="1">
    <citation type="journal article" date="1998" name="Anticancer Res.">
        <title>Differential gene expression in mammary carcinoma cell lines: identification of DRIM, a new gene down-regulated in metastasis.</title>
        <authorList>
            <person name="Schwirzke M."/>
            <person name="Gnirke A."/>
            <person name="Bork P."/>
            <person name="Tarin D."/>
            <person name="Weidle U.H."/>
        </authorList>
    </citation>
    <scope>NUCLEOTIDE SEQUENCE [MRNA]</scope>
    <scope>TISSUE SPECIFICITY</scope>
    <scope>VARIANT GLN-1882</scope>
</reference>
<reference key="2">
    <citation type="journal article" date="2006" name="Nature">
        <title>The finished DNA sequence of human chromosome 12.</title>
        <authorList>
            <person name="Scherer S.E."/>
            <person name="Muzny D.M."/>
            <person name="Buhay C.J."/>
            <person name="Chen R."/>
            <person name="Cree A."/>
            <person name="Ding Y."/>
            <person name="Dugan-Rocha S."/>
            <person name="Gill R."/>
            <person name="Gunaratne P."/>
            <person name="Harris R.A."/>
            <person name="Hawes A.C."/>
            <person name="Hernandez J."/>
            <person name="Hodgson A.V."/>
            <person name="Hume J."/>
            <person name="Jackson A."/>
            <person name="Khan Z.M."/>
            <person name="Kovar-Smith C."/>
            <person name="Lewis L.R."/>
            <person name="Lozado R.J."/>
            <person name="Metzker M.L."/>
            <person name="Milosavljevic A."/>
            <person name="Miner G.R."/>
            <person name="Montgomery K.T."/>
            <person name="Morgan M.B."/>
            <person name="Nazareth L.V."/>
            <person name="Scott G."/>
            <person name="Sodergren E."/>
            <person name="Song X.-Z."/>
            <person name="Steffen D."/>
            <person name="Lovering R.C."/>
            <person name="Wheeler D.A."/>
            <person name="Worley K.C."/>
            <person name="Yuan Y."/>
            <person name="Zhang Z."/>
            <person name="Adams C.Q."/>
            <person name="Ansari-Lari M.A."/>
            <person name="Ayele M."/>
            <person name="Brown M.J."/>
            <person name="Chen G."/>
            <person name="Chen Z."/>
            <person name="Clerc-Blankenburg K.P."/>
            <person name="Davis C."/>
            <person name="Delgado O."/>
            <person name="Dinh H.H."/>
            <person name="Draper H."/>
            <person name="Gonzalez-Garay M.L."/>
            <person name="Havlak P."/>
            <person name="Jackson L.R."/>
            <person name="Jacob L.S."/>
            <person name="Kelly S.H."/>
            <person name="Li L."/>
            <person name="Li Z."/>
            <person name="Liu J."/>
            <person name="Liu W."/>
            <person name="Lu J."/>
            <person name="Maheshwari M."/>
            <person name="Nguyen B.-V."/>
            <person name="Okwuonu G.O."/>
            <person name="Pasternak S."/>
            <person name="Perez L.M."/>
            <person name="Plopper F.J.H."/>
            <person name="Santibanez J."/>
            <person name="Shen H."/>
            <person name="Tabor P.E."/>
            <person name="Verduzco D."/>
            <person name="Waldron L."/>
            <person name="Wang Q."/>
            <person name="Williams G.A."/>
            <person name="Zhang J."/>
            <person name="Zhou J."/>
            <person name="Allen C.C."/>
            <person name="Amin A.G."/>
            <person name="Anyalebechi V."/>
            <person name="Bailey M."/>
            <person name="Barbaria J.A."/>
            <person name="Bimage K.E."/>
            <person name="Bryant N.P."/>
            <person name="Burch P.E."/>
            <person name="Burkett C.E."/>
            <person name="Burrell K.L."/>
            <person name="Calderon E."/>
            <person name="Cardenas V."/>
            <person name="Carter K."/>
            <person name="Casias K."/>
            <person name="Cavazos I."/>
            <person name="Cavazos S.R."/>
            <person name="Ceasar H."/>
            <person name="Chacko J."/>
            <person name="Chan S.N."/>
            <person name="Chavez D."/>
            <person name="Christopoulos C."/>
            <person name="Chu J."/>
            <person name="Cockrell R."/>
            <person name="Cox C.D."/>
            <person name="Dang M."/>
            <person name="Dathorne S.R."/>
            <person name="David R."/>
            <person name="Davis C.M."/>
            <person name="Davy-Carroll L."/>
            <person name="Deshazo D.R."/>
            <person name="Donlin J.E."/>
            <person name="D'Souza L."/>
            <person name="Eaves K.A."/>
            <person name="Egan A."/>
            <person name="Emery-Cohen A.J."/>
            <person name="Escotto M."/>
            <person name="Flagg N."/>
            <person name="Forbes L.D."/>
            <person name="Gabisi A.M."/>
            <person name="Garza M."/>
            <person name="Hamilton C."/>
            <person name="Henderson N."/>
            <person name="Hernandez O."/>
            <person name="Hines S."/>
            <person name="Hogues M.E."/>
            <person name="Huang M."/>
            <person name="Idlebird D.G."/>
            <person name="Johnson R."/>
            <person name="Jolivet A."/>
            <person name="Jones S."/>
            <person name="Kagan R."/>
            <person name="King L.M."/>
            <person name="Leal B."/>
            <person name="Lebow H."/>
            <person name="Lee S."/>
            <person name="LeVan J.M."/>
            <person name="Lewis L.C."/>
            <person name="London P."/>
            <person name="Lorensuhewa L.M."/>
            <person name="Loulseged H."/>
            <person name="Lovett D.A."/>
            <person name="Lucier A."/>
            <person name="Lucier R.L."/>
            <person name="Ma J."/>
            <person name="Madu R.C."/>
            <person name="Mapua P."/>
            <person name="Martindale A.D."/>
            <person name="Martinez E."/>
            <person name="Massey E."/>
            <person name="Mawhiney S."/>
            <person name="Meador M.G."/>
            <person name="Mendez S."/>
            <person name="Mercado C."/>
            <person name="Mercado I.C."/>
            <person name="Merritt C.E."/>
            <person name="Miner Z.L."/>
            <person name="Minja E."/>
            <person name="Mitchell T."/>
            <person name="Mohabbat F."/>
            <person name="Mohabbat K."/>
            <person name="Montgomery B."/>
            <person name="Moore N."/>
            <person name="Morris S."/>
            <person name="Munidasa M."/>
            <person name="Ngo R.N."/>
            <person name="Nguyen N.B."/>
            <person name="Nickerson E."/>
            <person name="Nwaokelemeh O.O."/>
            <person name="Nwokenkwo S."/>
            <person name="Obregon M."/>
            <person name="Oguh M."/>
            <person name="Oragunye N."/>
            <person name="Oviedo R.J."/>
            <person name="Parish B.J."/>
            <person name="Parker D.N."/>
            <person name="Parrish J."/>
            <person name="Parks K.L."/>
            <person name="Paul H.A."/>
            <person name="Payton B.A."/>
            <person name="Perez A."/>
            <person name="Perrin W."/>
            <person name="Pickens A."/>
            <person name="Primus E.L."/>
            <person name="Pu L.-L."/>
            <person name="Puazo M."/>
            <person name="Quiles M.M."/>
            <person name="Quiroz J.B."/>
            <person name="Rabata D."/>
            <person name="Reeves K."/>
            <person name="Ruiz S.J."/>
            <person name="Shao H."/>
            <person name="Sisson I."/>
            <person name="Sonaike T."/>
            <person name="Sorelle R.P."/>
            <person name="Sutton A.E."/>
            <person name="Svatek A.F."/>
            <person name="Svetz L.A."/>
            <person name="Tamerisa K.S."/>
            <person name="Taylor T.R."/>
            <person name="Teague B."/>
            <person name="Thomas N."/>
            <person name="Thorn R.D."/>
            <person name="Trejos Z.Y."/>
            <person name="Trevino B.K."/>
            <person name="Ukegbu O.N."/>
            <person name="Urban J.B."/>
            <person name="Vasquez L.I."/>
            <person name="Vera V.A."/>
            <person name="Villasana D.M."/>
            <person name="Wang L."/>
            <person name="Ward-Moore S."/>
            <person name="Warren J.T."/>
            <person name="Wei X."/>
            <person name="White F."/>
            <person name="Williamson A.L."/>
            <person name="Wleczyk R."/>
            <person name="Wooden H.S."/>
            <person name="Wooden S.H."/>
            <person name="Yen J."/>
            <person name="Yoon L."/>
            <person name="Yoon V."/>
            <person name="Zorrilla S.E."/>
            <person name="Nelson D."/>
            <person name="Kucherlapati R."/>
            <person name="Weinstock G."/>
            <person name="Gibbs R.A."/>
        </authorList>
    </citation>
    <scope>NUCLEOTIDE SEQUENCE [LARGE SCALE GENOMIC DNA]</scope>
</reference>
<reference key="3">
    <citation type="submission" date="1998-06" db="EMBL/GenBank/DDBJ databases">
        <title>Key-1A6.</title>
        <authorList>
            <person name="Ke Y."/>
            <person name="Hagiwara K."/>
            <person name="Zhao H."/>
            <person name="Ning T."/>
            <person name="Su X.L."/>
            <person name="Mcmenamin H."/>
            <person name="Lu G.R."/>
            <person name="Wang B."/>
            <person name="Harris C.C."/>
        </authorList>
    </citation>
    <scope>NUCLEOTIDE SEQUENCE [MRNA] OF 1883-2785</scope>
</reference>
<reference key="4">
    <citation type="journal article" date="2002" name="Curr. Biol.">
        <title>Directed proteomic analysis of the human nucleolus.</title>
        <authorList>
            <person name="Andersen J.S."/>
            <person name="Lyon C.E."/>
            <person name="Fox A.H."/>
            <person name="Leung A.K.L."/>
            <person name="Lam Y.W."/>
            <person name="Steen H."/>
            <person name="Mann M."/>
            <person name="Lamond A.I."/>
        </authorList>
    </citation>
    <scope>IDENTIFICATION BY MASS SPECTROMETRY</scope>
    <scope>SUBCELLULAR LOCATION</scope>
</reference>
<reference key="5">
    <citation type="journal article" date="2002" name="Mol. Biol. Cell">
        <title>Functional proteomic analysis of human nucleolus.</title>
        <authorList>
            <person name="Scherl A."/>
            <person name="Coute Y."/>
            <person name="Deon C."/>
            <person name="Calle A."/>
            <person name="Kindbeiter K."/>
            <person name="Sanchez J.-C."/>
            <person name="Greco A."/>
            <person name="Hochstrasser D.F."/>
            <person name="Diaz J.-J."/>
        </authorList>
    </citation>
    <scope>SUBCELLULAR LOCATION [LARGE SCALE ANALYSIS]</scope>
    <source>
        <tissue>Cervix carcinoma</tissue>
    </source>
</reference>
<reference key="6">
    <citation type="journal article" date="2005" name="Biochem. Biophys. Res. Commun.">
        <title>KIAA0649, a 1A6/DRIM-interacting protein with the oncogenic potential.</title>
        <authorList>
            <person name="Yang L."/>
            <person name="Zhao J."/>
            <person name="Lu W."/>
            <person name="Li Y."/>
            <person name="Du X."/>
            <person name="Ning T."/>
            <person name="Lu G."/>
            <person name="Ke Y."/>
        </authorList>
    </citation>
    <scope>INTERACTION WITH PPP1R26</scope>
</reference>
<reference key="7">
    <citation type="journal article" date="2006" name="FEBS Lett.">
        <title>Mapping nucleolar localization sequences of 1A6/DRIM.</title>
        <authorList>
            <person name="Liu J."/>
            <person name="Du X."/>
            <person name="Ke Y."/>
        </authorList>
    </citation>
    <scope>SUBCELLULAR LOCATION</scope>
    <scope>MUTAGENESIS OF 2744-LYS--LYS-2746; LYS-2744; LYS-2745; LYS-2746; 2748-LYS-LYS-2749; LYS-2748; LYS-2749; LYS-2751; LYS-2753; 2757-LYS--LYS-2760; LYS-2757; LYS-2758 AND LYS-2760</scope>
</reference>
<reference key="8">
    <citation type="journal article" date="2007" name="Biochim. Biophys. Acta">
        <title>Human 1A6/DRIM, the homolog of yeast Utp20, functions in the 18S rRNA processing.</title>
        <authorList>
            <person name="Wang Y."/>
            <person name="Liu J."/>
            <person name="Zhao H."/>
            <person name="Lue W."/>
            <person name="Zhao J."/>
            <person name="Yang L."/>
            <person name="Li N."/>
            <person name="Du X."/>
            <person name="Ke Y."/>
        </authorList>
    </citation>
    <scope>FUNCTION</scope>
    <scope>INTERACTION WITH FBL</scope>
</reference>
<reference key="9">
    <citation type="journal article" date="2008" name="Mol. Cell">
        <title>Kinase-selective enrichment enables quantitative phosphoproteomics of the kinome across the cell cycle.</title>
        <authorList>
            <person name="Daub H."/>
            <person name="Olsen J.V."/>
            <person name="Bairlein M."/>
            <person name="Gnad F."/>
            <person name="Oppermann F.S."/>
            <person name="Korner R."/>
            <person name="Greff Z."/>
            <person name="Keri G."/>
            <person name="Stemmann O."/>
            <person name="Mann M."/>
        </authorList>
    </citation>
    <scope>PHOSPHORYLATION [LARGE SCALE ANALYSIS] AT SER-788 AND THR-1741</scope>
    <scope>IDENTIFICATION BY MASS SPECTROMETRY [LARGE SCALE ANALYSIS]</scope>
    <source>
        <tissue>Cervix carcinoma</tissue>
    </source>
</reference>
<reference key="10">
    <citation type="journal article" date="2008" name="Proc. Natl. Acad. Sci. U.S.A.">
        <title>A quantitative atlas of mitotic phosphorylation.</title>
        <authorList>
            <person name="Dephoure N."/>
            <person name="Zhou C."/>
            <person name="Villen J."/>
            <person name="Beausoleil S.A."/>
            <person name="Bakalarski C.E."/>
            <person name="Elledge S.J."/>
            <person name="Gygi S.P."/>
        </authorList>
    </citation>
    <scope>PHOSPHORYLATION [LARGE SCALE ANALYSIS] AT THR-1741</scope>
    <scope>IDENTIFICATION BY MASS SPECTROMETRY [LARGE SCALE ANALYSIS]</scope>
    <source>
        <tissue>Cervix carcinoma</tissue>
    </source>
</reference>
<reference key="11">
    <citation type="journal article" date="2009" name="Anal. Chem.">
        <title>Lys-N and trypsin cover complementary parts of the phosphoproteome in a refined SCX-based approach.</title>
        <authorList>
            <person name="Gauci S."/>
            <person name="Helbig A.O."/>
            <person name="Slijper M."/>
            <person name="Krijgsveld J."/>
            <person name="Heck A.J."/>
            <person name="Mohammed S."/>
        </authorList>
    </citation>
    <scope>IDENTIFICATION BY MASS SPECTROMETRY [LARGE SCALE ANALYSIS]</scope>
</reference>
<reference key="12">
    <citation type="journal article" date="2009" name="Sci. Signal.">
        <title>Quantitative phosphoproteomic analysis of T cell receptor signaling reveals system-wide modulation of protein-protein interactions.</title>
        <authorList>
            <person name="Mayya V."/>
            <person name="Lundgren D.H."/>
            <person name="Hwang S.-I."/>
            <person name="Rezaul K."/>
            <person name="Wu L."/>
            <person name="Eng J.K."/>
            <person name="Rodionov V."/>
            <person name="Han D.K."/>
        </authorList>
    </citation>
    <scope>PHOSPHORYLATION [LARGE SCALE ANALYSIS] AT THR-1741</scope>
    <scope>IDENTIFICATION BY MASS SPECTROMETRY [LARGE SCALE ANALYSIS]</scope>
    <source>
        <tissue>Leukemic T-cell</tissue>
    </source>
</reference>
<reference key="13">
    <citation type="journal article" date="2010" name="Sci. Signal.">
        <title>Quantitative phosphoproteomics reveals widespread full phosphorylation site occupancy during mitosis.</title>
        <authorList>
            <person name="Olsen J.V."/>
            <person name="Vermeulen M."/>
            <person name="Santamaria A."/>
            <person name="Kumar C."/>
            <person name="Miller M.L."/>
            <person name="Jensen L.J."/>
            <person name="Gnad F."/>
            <person name="Cox J."/>
            <person name="Jensen T.S."/>
            <person name="Nigg E.A."/>
            <person name="Brunak S."/>
            <person name="Mann M."/>
        </authorList>
    </citation>
    <scope>PHOSPHORYLATION [LARGE SCALE ANALYSIS] AT SER-2601</scope>
    <scope>IDENTIFICATION BY MASS SPECTROMETRY [LARGE SCALE ANALYSIS]</scope>
    <source>
        <tissue>Cervix carcinoma</tissue>
    </source>
</reference>
<reference key="14">
    <citation type="journal article" date="2011" name="BMC Syst. Biol.">
        <title>Initial characterization of the human central proteome.</title>
        <authorList>
            <person name="Burkard T.R."/>
            <person name="Planyavsky M."/>
            <person name="Kaupe I."/>
            <person name="Breitwieser F.P."/>
            <person name="Buerckstuemmer T."/>
            <person name="Bennett K.L."/>
            <person name="Superti-Furga G."/>
            <person name="Colinge J."/>
        </authorList>
    </citation>
    <scope>IDENTIFICATION BY MASS SPECTROMETRY [LARGE SCALE ANALYSIS]</scope>
</reference>
<reference key="15">
    <citation type="journal article" date="2011" name="Sci. Signal.">
        <title>System-wide temporal characterization of the proteome and phosphoproteome of human embryonic stem cell differentiation.</title>
        <authorList>
            <person name="Rigbolt K.T."/>
            <person name="Prokhorova T.A."/>
            <person name="Akimov V."/>
            <person name="Henningsen J."/>
            <person name="Johansen P.T."/>
            <person name="Kratchmarova I."/>
            <person name="Kassem M."/>
            <person name="Mann M."/>
            <person name="Olsen J.V."/>
            <person name="Blagoev B."/>
        </authorList>
    </citation>
    <scope>PHOSPHORYLATION [LARGE SCALE ANALYSIS] AT THR-1741 AND SER-2601</scope>
    <scope>IDENTIFICATION BY MASS SPECTROMETRY [LARGE SCALE ANALYSIS]</scope>
</reference>
<reference key="16">
    <citation type="journal article" date="2013" name="J. Proteome Res.">
        <title>Toward a comprehensive characterization of a human cancer cell phosphoproteome.</title>
        <authorList>
            <person name="Zhou H."/>
            <person name="Di Palma S."/>
            <person name="Preisinger C."/>
            <person name="Peng M."/>
            <person name="Polat A.N."/>
            <person name="Heck A.J."/>
            <person name="Mohammed S."/>
        </authorList>
    </citation>
    <scope>PHOSPHORYLATION [LARGE SCALE ANALYSIS] AT THR-1741 AND SER-2637</scope>
    <scope>IDENTIFICATION BY MASS SPECTROMETRY [LARGE SCALE ANALYSIS]</scope>
    <source>
        <tissue>Cervix carcinoma</tissue>
        <tissue>Erythroleukemia</tissue>
    </source>
</reference>
<reference evidence="13 14 15" key="17">
    <citation type="journal article" date="2021" name="Science">
        <title>Nucleolar maturation of the human small subunit processome.</title>
        <authorList>
            <person name="Singh S."/>
            <person name="Vanden Broeck A."/>
            <person name="Miller L."/>
            <person name="Chaker-Margot M."/>
            <person name="Klinge S."/>
        </authorList>
    </citation>
    <scope>STRUCTURE BY ELECTRON MICROSCOPY (2.70 ANGSTROMS)</scope>
    <scope>FUNCTION</scope>
    <scope>SUBUNIT</scope>
    <scope>SUBCELLULAR LOCATION</scope>
</reference>
<reference key="18">
    <citation type="journal article" date="2006" name="Science">
        <title>The consensus coding sequences of human breast and colorectal cancers.</title>
        <authorList>
            <person name="Sjoeblom T."/>
            <person name="Jones S."/>
            <person name="Wood L.D."/>
            <person name="Parsons D.W."/>
            <person name="Lin J."/>
            <person name="Barber T.D."/>
            <person name="Mandelker D."/>
            <person name="Leary R.J."/>
            <person name="Ptak J."/>
            <person name="Silliman N."/>
            <person name="Szabo S."/>
            <person name="Buckhaults P."/>
            <person name="Farrell C."/>
            <person name="Meeh P."/>
            <person name="Markowitz S.D."/>
            <person name="Willis J."/>
            <person name="Dawson D."/>
            <person name="Willson J.K.V."/>
            <person name="Gazdar A.F."/>
            <person name="Hartigan J."/>
            <person name="Wu L."/>
            <person name="Liu C."/>
            <person name="Parmigiani G."/>
            <person name="Park B.H."/>
            <person name="Bachman K.E."/>
            <person name="Papadopoulos N."/>
            <person name="Vogelstein B."/>
            <person name="Kinzler K.W."/>
            <person name="Velculescu V.E."/>
        </authorList>
    </citation>
    <scope>VARIANTS [LARGE SCALE ANALYSIS] ILE-1645 AND PHE-2452</scope>
</reference>
<name>UTP20_HUMAN</name>
<comment type="function">
    <text evidence="8 9">Part of the small subunit (SSU) processome, first precursor of the small eukaryotic ribosomal subunit. During the assembly of the SSU processome in the nucleolus, many ribosome biogenesis factors, an RNA chaperone and ribosomal proteins associate with the nascent pre-rRNA and work in concert to generate RNA folding, modifications, rearrangements and cleavage as well as targeted degradation of pre-ribosomal RNA by the RNA exosome. Involved in 18S pre-rRNA processing. Associates with U3 snoRNA.</text>
</comment>
<comment type="subunit">
    <text evidence="5 8 9">Part of the small subunit (SSU) processome, composed of more than 70 proteins and the RNA chaperone small nucleolar RNA (snoRNA) U3 (PubMed:34516797). Interacts with FBL and PPP1R26 (PubMed:16053918, PubMed:17498821).</text>
</comment>
<comment type="interaction">
    <interactant intactId="EBI-356062">
        <id>O75691</id>
    </interactant>
    <interactant intactId="EBI-308500">
        <id>Q5T8A7</id>
        <label>PPP1R26</label>
    </interactant>
    <organismsDiffer>false</organismsDiffer>
    <experiments>4</experiments>
</comment>
<comment type="subcellular location">
    <subcellularLocation>
        <location evidence="3 4 6 9">Nucleus</location>
        <location evidence="3 4 6 9">Nucleolus</location>
    </subcellularLocation>
    <text>Colocalizes with NCL in the nucleolus.</text>
</comment>
<comment type="tissue specificity">
    <text evidence="10">Expressed in appendix, brain, colon, fetal liver, heart, ovary, pancreas, placenta, prostate, skeletal muscle, small intestine, spleen, testis and thymus.</text>
</comment>
<comment type="similarity">
    <text evidence="11">Belongs to the UTP20 family.</text>
</comment>
<comment type="sequence caution" evidence="11">
    <conflict type="erroneous initiation">
        <sequence resource="EMBL-CDS" id="AAG35208"/>
    </conflict>
    <text>Truncated N-terminus.</text>
</comment>
<protein>
    <recommendedName>
        <fullName>Small subunit processome component 20 homolog</fullName>
    </recommendedName>
    <alternativeName>
        <fullName>Down-regulated in metastasis protein</fullName>
    </alternativeName>
    <alternativeName>
        <fullName>Novel nucleolar protein 73</fullName>
        <shortName>NNP73</shortName>
    </alternativeName>
    <alternativeName>
        <fullName>Protein Key-1A6</fullName>
    </alternativeName>
</protein>